<dbReference type="EC" id="3.6.4.13" evidence="1"/>
<dbReference type="EMBL" id="AE013218">
    <property type="protein sequence ID" value="AAM67913.1"/>
    <property type="molecule type" value="Genomic_DNA"/>
</dbReference>
<dbReference type="RefSeq" id="WP_011053880.1">
    <property type="nucleotide sequence ID" value="NC_004061.1"/>
</dbReference>
<dbReference type="SMR" id="Q8K9H6"/>
<dbReference type="STRING" id="198804.BUsg_360"/>
<dbReference type="GeneID" id="93003830"/>
<dbReference type="KEGG" id="bas:BUsg_360"/>
<dbReference type="eggNOG" id="COG0513">
    <property type="taxonomic scope" value="Bacteria"/>
</dbReference>
<dbReference type="HOGENOM" id="CLU_003041_21_1_6"/>
<dbReference type="Proteomes" id="UP000000416">
    <property type="component" value="Chromosome"/>
</dbReference>
<dbReference type="GO" id="GO:0005829">
    <property type="term" value="C:cytosol"/>
    <property type="evidence" value="ECO:0007669"/>
    <property type="project" value="TreeGrafter"/>
</dbReference>
<dbReference type="GO" id="GO:0005840">
    <property type="term" value="C:ribosome"/>
    <property type="evidence" value="ECO:0007669"/>
    <property type="project" value="TreeGrafter"/>
</dbReference>
<dbReference type="GO" id="GO:0005524">
    <property type="term" value="F:ATP binding"/>
    <property type="evidence" value="ECO:0007669"/>
    <property type="project" value="UniProtKB-UniRule"/>
</dbReference>
<dbReference type="GO" id="GO:0016887">
    <property type="term" value="F:ATP hydrolysis activity"/>
    <property type="evidence" value="ECO:0007669"/>
    <property type="project" value="RHEA"/>
</dbReference>
<dbReference type="GO" id="GO:0003724">
    <property type="term" value="F:RNA helicase activity"/>
    <property type="evidence" value="ECO:0007669"/>
    <property type="project" value="UniProtKB-UniRule"/>
</dbReference>
<dbReference type="GO" id="GO:0033592">
    <property type="term" value="F:RNA strand annealing activity"/>
    <property type="evidence" value="ECO:0007669"/>
    <property type="project" value="TreeGrafter"/>
</dbReference>
<dbReference type="GO" id="GO:0070417">
    <property type="term" value="P:cellular response to cold"/>
    <property type="evidence" value="ECO:0007669"/>
    <property type="project" value="InterPro"/>
</dbReference>
<dbReference type="GO" id="GO:0000027">
    <property type="term" value="P:ribosomal large subunit assembly"/>
    <property type="evidence" value="ECO:0007669"/>
    <property type="project" value="UniProtKB-UniRule"/>
</dbReference>
<dbReference type="GO" id="GO:0006401">
    <property type="term" value="P:RNA catabolic process"/>
    <property type="evidence" value="ECO:0007669"/>
    <property type="project" value="UniProtKB-UniRule"/>
</dbReference>
<dbReference type="CDD" id="cd00268">
    <property type="entry name" value="DEADc"/>
    <property type="match status" value="1"/>
</dbReference>
<dbReference type="CDD" id="cd12499">
    <property type="entry name" value="RRM_EcCsdA_like"/>
    <property type="match status" value="1"/>
</dbReference>
<dbReference type="CDD" id="cd18787">
    <property type="entry name" value="SF2_C_DEAD"/>
    <property type="match status" value="1"/>
</dbReference>
<dbReference type="FunFam" id="3.30.70.330:FF:000068">
    <property type="entry name" value="ATP-dependent RNA helicase DeaD"/>
    <property type="match status" value="1"/>
</dbReference>
<dbReference type="FunFam" id="3.40.50.300:FF:000374">
    <property type="entry name" value="ATP-dependent RNA helicase DeaD"/>
    <property type="match status" value="1"/>
</dbReference>
<dbReference type="FunFam" id="3.40.50.300:FF:000108">
    <property type="entry name" value="ATP-dependent RNA helicase RhlE"/>
    <property type="match status" value="1"/>
</dbReference>
<dbReference type="Gene3D" id="3.30.70.330">
    <property type="match status" value="1"/>
</dbReference>
<dbReference type="Gene3D" id="3.40.50.300">
    <property type="entry name" value="P-loop containing nucleotide triphosphate hydrolases"/>
    <property type="match status" value="2"/>
</dbReference>
<dbReference type="HAMAP" id="MF_00964">
    <property type="entry name" value="DEAD_helicase_DeaD"/>
    <property type="match status" value="1"/>
</dbReference>
<dbReference type="InterPro" id="IPR034415">
    <property type="entry name" value="CsdA_RRM"/>
</dbReference>
<dbReference type="InterPro" id="IPR005580">
    <property type="entry name" value="DbpA/CsdA_RNA-bd_dom"/>
</dbReference>
<dbReference type="InterPro" id="IPR011545">
    <property type="entry name" value="DEAD/DEAH_box_helicase_dom"/>
</dbReference>
<dbReference type="InterPro" id="IPR050547">
    <property type="entry name" value="DEAD_box_RNA_helicases"/>
</dbReference>
<dbReference type="InterPro" id="IPR028618">
    <property type="entry name" value="DEAD_helicase_DeaD"/>
</dbReference>
<dbReference type="InterPro" id="IPR014001">
    <property type="entry name" value="Helicase_ATP-bd"/>
</dbReference>
<dbReference type="InterPro" id="IPR001650">
    <property type="entry name" value="Helicase_C-like"/>
</dbReference>
<dbReference type="InterPro" id="IPR012677">
    <property type="entry name" value="Nucleotide-bd_a/b_plait_sf"/>
</dbReference>
<dbReference type="InterPro" id="IPR027417">
    <property type="entry name" value="P-loop_NTPase"/>
</dbReference>
<dbReference type="InterPro" id="IPR000629">
    <property type="entry name" value="RNA-helicase_DEAD-box_CS"/>
</dbReference>
<dbReference type="InterPro" id="IPR014014">
    <property type="entry name" value="RNA_helicase_DEAD_Q_motif"/>
</dbReference>
<dbReference type="NCBIfam" id="NF008642">
    <property type="entry name" value="PRK11634.1"/>
    <property type="match status" value="1"/>
</dbReference>
<dbReference type="PANTHER" id="PTHR47963:SF8">
    <property type="entry name" value="ATP-DEPENDENT RNA HELICASE DEAD"/>
    <property type="match status" value="1"/>
</dbReference>
<dbReference type="PANTHER" id="PTHR47963">
    <property type="entry name" value="DEAD-BOX ATP-DEPENDENT RNA HELICASE 47, MITOCHONDRIAL"/>
    <property type="match status" value="1"/>
</dbReference>
<dbReference type="Pfam" id="PF03880">
    <property type="entry name" value="DbpA"/>
    <property type="match status" value="1"/>
</dbReference>
<dbReference type="Pfam" id="PF00270">
    <property type="entry name" value="DEAD"/>
    <property type="match status" value="1"/>
</dbReference>
<dbReference type="Pfam" id="PF25399">
    <property type="entry name" value="DeaD_dimer"/>
    <property type="match status" value="1"/>
</dbReference>
<dbReference type="Pfam" id="PF00271">
    <property type="entry name" value="Helicase_C"/>
    <property type="match status" value="1"/>
</dbReference>
<dbReference type="SMART" id="SM00487">
    <property type="entry name" value="DEXDc"/>
    <property type="match status" value="1"/>
</dbReference>
<dbReference type="SMART" id="SM00490">
    <property type="entry name" value="HELICc"/>
    <property type="match status" value="1"/>
</dbReference>
<dbReference type="SUPFAM" id="SSF52540">
    <property type="entry name" value="P-loop containing nucleoside triphosphate hydrolases"/>
    <property type="match status" value="2"/>
</dbReference>
<dbReference type="PROSITE" id="PS00039">
    <property type="entry name" value="DEAD_ATP_HELICASE"/>
    <property type="match status" value="1"/>
</dbReference>
<dbReference type="PROSITE" id="PS51192">
    <property type="entry name" value="HELICASE_ATP_BIND_1"/>
    <property type="match status" value="1"/>
</dbReference>
<dbReference type="PROSITE" id="PS51194">
    <property type="entry name" value="HELICASE_CTER"/>
    <property type="match status" value="1"/>
</dbReference>
<dbReference type="PROSITE" id="PS51195">
    <property type="entry name" value="Q_MOTIF"/>
    <property type="match status" value="1"/>
</dbReference>
<reference key="1">
    <citation type="journal article" date="2002" name="Science">
        <title>50 million years of genomic stasis in endosymbiotic bacteria.</title>
        <authorList>
            <person name="Tamas I."/>
            <person name="Klasson L."/>
            <person name="Canbaeck B."/>
            <person name="Naeslund A.K."/>
            <person name="Eriksson A.-S."/>
            <person name="Wernegreen J.J."/>
            <person name="Sandstroem J.P."/>
            <person name="Moran N.A."/>
            <person name="Andersson S.G.E."/>
        </authorList>
    </citation>
    <scope>NUCLEOTIDE SEQUENCE [LARGE SCALE GENOMIC DNA]</scope>
    <source>
        <strain>Sg</strain>
    </source>
</reference>
<feature type="chain" id="PRO_0000055099" description="ATP-dependent RNA helicase DeaD">
    <location>
        <begin position="1"/>
        <end position="601"/>
    </location>
</feature>
<feature type="domain" description="Helicase ATP-binding" evidence="1">
    <location>
        <begin position="37"/>
        <end position="208"/>
    </location>
</feature>
<feature type="domain" description="Helicase C-terminal" evidence="1">
    <location>
        <begin position="231"/>
        <end position="378"/>
    </location>
</feature>
<feature type="region of interest" description="Disordered" evidence="2">
    <location>
        <begin position="564"/>
        <end position="601"/>
    </location>
</feature>
<feature type="short sequence motif" description="Q motif">
    <location>
        <begin position="6"/>
        <end position="34"/>
    </location>
</feature>
<feature type="short sequence motif" description="DEAD box">
    <location>
        <begin position="156"/>
        <end position="159"/>
    </location>
</feature>
<feature type="compositionally biased region" description="Basic and acidic residues" evidence="2">
    <location>
        <begin position="564"/>
        <end position="581"/>
    </location>
</feature>
<feature type="compositionally biased region" description="Polar residues" evidence="2">
    <location>
        <begin position="582"/>
        <end position="594"/>
    </location>
</feature>
<feature type="binding site" evidence="1">
    <location>
        <begin position="50"/>
        <end position="57"/>
    </location>
    <ligand>
        <name>ATP</name>
        <dbReference type="ChEBI" id="CHEBI:30616"/>
    </ligand>
</feature>
<sequence length="601" mass="68827">MTHTESTFSFLGLNPFIIKSLSKMGYVKPSPIQAACIPLLLEGRDVLGMAQTGSGKTAAFSLPLLHNLNINLKAPQILVLAPTRELAVQVAEAFSDFSKYIMGIHVLPLYGGQRYEVQLRALRQGPQIVVGTPGRLLDHLKRGTLNLSNLYALVLDEADEMLRMGFIEDVETIMSQIPKEHQTALFSATMPEAIRRISKRFMKNPQEIKIQSNITTRPDIKQSYWMVYGRKTDALIRFLEVEDFSATIIFVKTKNATLEVSEALERNGYNSAALNGDMNQALREQTLERLKSGRLDILIATDVAARGLDVDRISFVINYDIPMDSESYVHRIGRTGRAGRAGRALLFVENRERRLLRNIERTINQTIPEVQLPKIEVLCKRRLERFAKKVQEQLESRDLDEYSALLDKLYSPDDLDIKTLASALLKMAQGGRPLIIKKDLLQRPSREFSFKDDRRREDNHRNNNRNRRERRELKDIDLYRIEAGRNDGVEVRHIVGAIANEGNINSRNIGNIKLFSSYAIVELPKGLSKDLLQRLIKTKILNKKINIKLLRDIKNYETRTHNRSIFNKDKNNKRRFSDNRLNKSSSIKNETKSSFFRRKSV</sequence>
<keyword id="KW-0067">ATP-binding</keyword>
<keyword id="KW-0963">Cytoplasm</keyword>
<keyword id="KW-0347">Helicase</keyword>
<keyword id="KW-0378">Hydrolase</keyword>
<keyword id="KW-0547">Nucleotide-binding</keyword>
<keyword id="KW-0694">RNA-binding</keyword>
<keyword id="KW-0346">Stress response</keyword>
<protein>
    <recommendedName>
        <fullName evidence="1">ATP-dependent RNA helicase DeaD</fullName>
        <ecNumber evidence="1">3.6.4.13</ecNumber>
    </recommendedName>
    <alternativeName>
        <fullName evidence="1">Cold-shock DEAD box protein A</fullName>
    </alternativeName>
</protein>
<evidence type="ECO:0000255" key="1">
    <source>
        <dbReference type="HAMAP-Rule" id="MF_00964"/>
    </source>
</evidence>
<evidence type="ECO:0000256" key="2">
    <source>
        <dbReference type="SAM" id="MobiDB-lite"/>
    </source>
</evidence>
<proteinExistence type="inferred from homology"/>
<name>DEAD_BUCAP</name>
<gene>
    <name evidence="1" type="primary">deaD</name>
    <name evidence="1" type="synonym">csdA</name>
    <name type="ordered locus">BUsg_360</name>
</gene>
<organism>
    <name type="scientific">Buchnera aphidicola subsp. Schizaphis graminum (strain Sg)</name>
    <dbReference type="NCBI Taxonomy" id="198804"/>
    <lineage>
        <taxon>Bacteria</taxon>
        <taxon>Pseudomonadati</taxon>
        <taxon>Pseudomonadota</taxon>
        <taxon>Gammaproteobacteria</taxon>
        <taxon>Enterobacterales</taxon>
        <taxon>Erwiniaceae</taxon>
        <taxon>Buchnera</taxon>
    </lineage>
</organism>
<comment type="function">
    <text evidence="1">DEAD-box RNA helicase involved in various cellular processes at low temperature, including ribosome biogenesis, mRNA degradation and translation initiation.</text>
</comment>
<comment type="catalytic activity">
    <reaction evidence="1">
        <text>ATP + H2O = ADP + phosphate + H(+)</text>
        <dbReference type="Rhea" id="RHEA:13065"/>
        <dbReference type="ChEBI" id="CHEBI:15377"/>
        <dbReference type="ChEBI" id="CHEBI:15378"/>
        <dbReference type="ChEBI" id="CHEBI:30616"/>
        <dbReference type="ChEBI" id="CHEBI:43474"/>
        <dbReference type="ChEBI" id="CHEBI:456216"/>
        <dbReference type="EC" id="3.6.4.13"/>
    </reaction>
</comment>
<comment type="subcellular location">
    <subcellularLocation>
        <location evidence="1">Cytoplasm</location>
    </subcellularLocation>
</comment>
<comment type="similarity">
    <text evidence="1">Belongs to the DEAD box helicase family. DeaD/CsdA subfamily.</text>
</comment>
<accession>Q8K9H6</accession>